<keyword id="KW-0002">3D-structure</keyword>
<keyword id="KW-0963">Cytoplasm</keyword>
<keyword id="KW-0903">Direct protein sequencing</keyword>
<keyword id="KW-0464">Manganese</keyword>
<keyword id="KW-0479">Metal-binding</keyword>
<keyword id="KW-0521">NADP</keyword>
<keyword id="KW-0560">Oxidoreductase</keyword>
<accession>P40927</accession>
<organism>
    <name type="scientific">Columba livia</name>
    <name type="common">Rock dove</name>
    <dbReference type="NCBI Taxonomy" id="8932"/>
    <lineage>
        <taxon>Eukaryota</taxon>
        <taxon>Metazoa</taxon>
        <taxon>Chordata</taxon>
        <taxon>Craniata</taxon>
        <taxon>Vertebrata</taxon>
        <taxon>Euteleostomi</taxon>
        <taxon>Archelosauria</taxon>
        <taxon>Archosauria</taxon>
        <taxon>Dinosauria</taxon>
        <taxon>Saurischia</taxon>
        <taxon>Theropoda</taxon>
        <taxon>Coelurosauria</taxon>
        <taxon>Aves</taxon>
        <taxon>Neognathae</taxon>
        <taxon>Neoaves</taxon>
        <taxon>Columbimorphae</taxon>
        <taxon>Columbiformes</taxon>
        <taxon>Columbidae</taxon>
        <taxon>Columba</taxon>
    </lineage>
</organism>
<reference key="1">
    <citation type="journal article" date="1994" name="Arch. Biochem. Biophys.">
        <title>Cloning and expression of pigeon liver cytosolic NADP(+)-dependent malic enzyme cDNA and some of its abortive mutants.</title>
        <authorList>
            <person name="Chou W.-Y."/>
            <person name="Huang S.-M."/>
            <person name="Liu Y.H."/>
            <person name="Chang G.-G."/>
        </authorList>
    </citation>
    <scope>NUCLEOTIDE SEQUENCE [MRNA]</scope>
    <source>
        <tissue>Liver</tissue>
    </source>
</reference>
<reference key="2">
    <citation type="journal article" date="1994" name="Biochemistry">
        <title>Affinity cleavage at the putative metal-binding site of pigeon liver malic enzyme by the Fe(2+)-ascorbate system.</title>
        <authorList>
            <person name="Wei C.H."/>
            <person name="Chou W.-Y."/>
            <person name="Huang S.-M."/>
            <person name="Lin C.C."/>
            <person name="Chang G.-G."/>
        </authorList>
    </citation>
    <scope>PROTEIN SEQUENCE OF 259-283</scope>
</reference>
<reference key="3">
    <citation type="journal article" date="2000" name="Biochem. Biophys. Res. Commun.">
        <title>Lysine residues 162 and 340 are involved in the catalysis and coenzyme binding of NADP(+)-dependent malic enzyme from pigeon.</title>
        <authorList>
            <person name="Kuo C.C."/>
            <person name="Tsai L.C."/>
            <person name="Chin T.Y."/>
            <person name="Chang G.G."/>
            <person name="Chou W.Y."/>
        </authorList>
    </citation>
    <scope>MUTAGENESIS OF LYS-162 AND LYS-340</scope>
</reference>
<reference key="4">
    <citation type="journal article" date="2000" name="Protein Sci.">
        <title>Characterization of the functional role of Asp141, Asp194, and Asp464 residues in the Mn2+-L-malate binding of pigeon liver malic enzyme.</title>
        <authorList>
            <person name="Chou W.Y."/>
            <person name="Chang H.P."/>
            <person name="Huang C.H."/>
            <person name="Kuo C.C."/>
            <person name="Tong L."/>
            <person name="Chang G.G."/>
        </authorList>
    </citation>
    <scope>MUTAGENESIS OF ASP-141; ASP-194 AND ASP-464</scope>
</reference>
<reference key="5">
    <citation type="journal article" date="2002" name="Protein Sci.">
        <title>Structural studies of the pigeon cytosolic NADP(+)-dependent malic enzyme.</title>
        <authorList>
            <person name="Yang Z."/>
            <person name="Zhang H."/>
            <person name="Huang H.-C."/>
            <person name="Kuo C.-C."/>
            <person name="Tsai L.-C."/>
            <person name="Yuan H.S."/>
            <person name="Chou W.-Y."/>
            <person name="Chang G.-G."/>
            <person name="Tong L."/>
        </authorList>
    </citation>
    <scope>X-RAY CRYSTALLOGRAPHY (2.5 ANGSTROMS) OF 2-556 IN COMPLEX WITH NADP; MANGANESE AND SUBSTRATE ANALOG</scope>
    <scope>SUBUNIT</scope>
</reference>
<sequence>MKKGYEVLRDPHLNKGMAFTLEERQQLNIHGLLPPCFLGQDAQVYSILKNFERLTSDLDRYILLMSLQDRNEKLFYKVLTSDIERFMPIVYTPTVGLACQHYGLAFRRPRGLFITIHDRGHIATMLQSWPESVIKAIVVTDGERILGLGDLGCYGMGIPVGKLALYTACGGVKPHQCLPVMLDVGTDNETLLKDPLYIGLRHKRIRGQAYDDLLDEFMEAVTSRYGMNCLIQFEDFANANAFRLLHKYRNKYCTFNDDIQGTASVAVAGLLAALRITKNRLSDHTVLFQGAGEAALGIANLIVMAMQKEGVSKEEAIKRIWMVDSKGLIVKGRASLTPEKEHFAHEHCEMKNLEDIVKDIKPTVLIGVAAIGGAFTQQILQDMAAFNKRPIIFALSNPTSKAECTAEQLYKYTEGRGIFASGSPFDPVTLPSGQTLYPGQGNNSYVFPGVALGVISCGLKHIGDDVFLTTAEVIAQEVSEENLQEGRLYPPLVTIQQVSLKIAVRIAKEAYRNNTASTYPQPEDLEAFIRSQVYSTDYNCFVADSYTWPEEAMKVKL</sequence>
<feature type="chain" id="PRO_0000160198" description="NADP-dependent malic enzyme">
    <location>
        <begin position="1"/>
        <end position="557"/>
    </location>
</feature>
<feature type="active site" description="Proton donor" evidence="5">
    <location>
        <position position="91"/>
    </location>
</feature>
<feature type="active site" description="Proton acceptor" evidence="5">
    <location>
        <position position="162"/>
    </location>
</feature>
<feature type="binding site" evidence="3">
    <location>
        <position position="144"/>
    </location>
    <ligand>
        <name>NADP(+)</name>
        <dbReference type="ChEBI" id="CHEBI:58349"/>
    </ligand>
</feature>
<feature type="binding site" evidence="3">
    <location>
        <position position="144"/>
    </location>
    <ligand>
        <name>substrate</name>
    </ligand>
</feature>
<feature type="binding site" evidence="3">
    <location>
        <position position="162"/>
    </location>
    <ligand>
        <name>substrate</name>
    </ligand>
</feature>
<feature type="binding site" evidence="3">
    <location>
        <position position="234"/>
    </location>
    <ligand>
        <name>Mn(2+)</name>
        <dbReference type="ChEBI" id="CHEBI:29035"/>
    </ligand>
</feature>
<feature type="binding site" evidence="3">
    <location>
        <position position="235"/>
    </location>
    <ligand>
        <name>Mn(2+)</name>
        <dbReference type="ChEBI" id="CHEBI:29035"/>
    </ligand>
</feature>
<feature type="binding site" evidence="3">
    <location>
        <position position="238"/>
    </location>
    <ligand>
        <name>NADP(+)</name>
        <dbReference type="ChEBI" id="CHEBI:58349"/>
    </ligand>
</feature>
<feature type="binding site" evidence="3">
    <location>
        <position position="258"/>
    </location>
    <ligand>
        <name>Mn(2+)</name>
        <dbReference type="ChEBI" id="CHEBI:29035"/>
    </ligand>
</feature>
<feature type="binding site" evidence="3">
    <location>
        <begin position="291"/>
        <end position="294"/>
    </location>
    <ligand>
        <name>NADP(+)</name>
        <dbReference type="ChEBI" id="CHEBI:58349"/>
    </ligand>
</feature>
<feature type="binding site" evidence="3">
    <location>
        <position position="325"/>
    </location>
    <ligand>
        <name>NADP(+)</name>
        <dbReference type="ChEBI" id="CHEBI:58349"/>
    </ligand>
</feature>
<feature type="binding site" evidence="3">
    <location>
        <position position="397"/>
    </location>
    <ligand>
        <name>NADP(+)</name>
        <dbReference type="ChEBI" id="CHEBI:58349"/>
    </ligand>
</feature>
<feature type="binding site" evidence="3">
    <location>
        <position position="443"/>
    </location>
    <ligand>
        <name>NADP(+)</name>
        <dbReference type="ChEBI" id="CHEBI:58349"/>
    </ligand>
</feature>
<feature type="binding site" evidence="3">
    <location>
        <position position="443"/>
    </location>
    <ligand>
        <name>substrate</name>
    </ligand>
</feature>
<feature type="site" description="Important for activity">
    <location>
        <position position="258"/>
    </location>
</feature>
<feature type="site" description="Confers specificity for NADP">
    <location>
        <position position="340"/>
    </location>
</feature>
<feature type="mutagenesis site" description="Increases Km for manganese 14-fold. Increases Km for malate 5-fold." evidence="1">
    <original>D</original>
    <variation>N</variation>
    <location>
        <position position="141"/>
    </location>
</feature>
<feature type="mutagenesis site" description="Decreases kcat 235-fold. no effect on Km for NADP." evidence="2">
    <original>K</original>
    <variation>A</variation>
    <location>
        <position position="162"/>
    </location>
</feature>
<feature type="mutagenesis site" description="No effect on Km for manganese. Increases Km for malate 8-fold." evidence="1">
    <original>D</original>
    <variation>N</variation>
    <location>
        <position position="194"/>
    </location>
</feature>
<feature type="mutagenesis site" description="Increases Km for NADP 65-fold. No effect on kcat." evidence="2">
    <original>K</original>
    <variation>A</variation>
    <location>
        <position position="340"/>
    </location>
</feature>
<feature type="mutagenesis site" description="No effect." evidence="1">
    <original>D</original>
    <variation>N</variation>
    <location>
        <position position="464"/>
    </location>
</feature>
<feature type="sequence conflict" description="In Ref. 2; AA sequence." evidence="4" ref="2">
    <original>N</original>
    <variation>D</variation>
    <location>
        <position position="279"/>
    </location>
</feature>
<feature type="helix" evidence="6">
    <location>
        <begin position="6"/>
        <end position="9"/>
    </location>
</feature>
<feature type="turn" evidence="6">
    <location>
        <begin position="11"/>
        <end position="13"/>
    </location>
</feature>
<feature type="helix" evidence="6">
    <location>
        <begin position="16"/>
        <end position="18"/>
    </location>
</feature>
<feature type="helix" evidence="6">
    <location>
        <begin position="21"/>
        <end position="26"/>
    </location>
</feature>
<feature type="helix" evidence="6">
    <location>
        <begin position="40"/>
        <end position="53"/>
    </location>
</feature>
<feature type="helix" evidence="6">
    <location>
        <begin position="57"/>
        <end position="70"/>
    </location>
</feature>
<feature type="helix" evidence="6">
    <location>
        <begin position="72"/>
        <end position="81"/>
    </location>
</feature>
<feature type="helix" evidence="6">
    <location>
        <begin position="83"/>
        <end position="90"/>
    </location>
</feature>
<feature type="helix" evidence="6">
    <location>
        <begin position="94"/>
        <end position="100"/>
    </location>
</feature>
<feature type="helix" evidence="6">
    <location>
        <begin position="102"/>
        <end position="105"/>
    </location>
</feature>
<feature type="strand" evidence="6">
    <location>
        <begin position="111"/>
        <end position="115"/>
    </location>
</feature>
<feature type="helix" evidence="6">
    <location>
        <begin position="116"/>
        <end position="118"/>
    </location>
</feature>
<feature type="helix" evidence="6">
    <location>
        <begin position="122"/>
        <end position="127"/>
    </location>
</feature>
<feature type="strand" evidence="6">
    <location>
        <begin position="136"/>
        <end position="140"/>
    </location>
</feature>
<feature type="strand" evidence="6">
    <location>
        <begin position="142"/>
        <end position="144"/>
    </location>
</feature>
<feature type="helix" evidence="6">
    <location>
        <begin position="146"/>
        <end position="148"/>
    </location>
</feature>
<feature type="helix" evidence="6">
    <location>
        <begin position="152"/>
        <end position="156"/>
    </location>
</feature>
<feature type="helix" evidence="6">
    <location>
        <begin position="157"/>
        <end position="168"/>
    </location>
</feature>
<feature type="helix" evidence="6">
    <location>
        <begin position="174"/>
        <end position="176"/>
    </location>
</feature>
<feature type="strand" evidence="6">
    <location>
        <begin position="177"/>
        <end position="184"/>
    </location>
</feature>
<feature type="helix" evidence="6">
    <location>
        <begin position="189"/>
        <end position="193"/>
    </location>
</feature>
<feature type="helix" evidence="6">
    <location>
        <begin position="208"/>
        <end position="225"/>
    </location>
</feature>
<feature type="strand" evidence="6">
    <location>
        <begin position="230"/>
        <end position="233"/>
    </location>
</feature>
<feature type="helix" evidence="6">
    <location>
        <begin position="238"/>
        <end position="248"/>
    </location>
</feature>
<feature type="turn" evidence="6">
    <location>
        <begin position="249"/>
        <end position="251"/>
    </location>
</feature>
<feature type="strand" evidence="6">
    <location>
        <begin position="252"/>
        <end position="256"/>
    </location>
</feature>
<feature type="turn" evidence="6">
    <location>
        <begin position="257"/>
        <end position="259"/>
    </location>
</feature>
<feature type="helix" evidence="6">
    <location>
        <begin position="260"/>
        <end position="277"/>
    </location>
</feature>
<feature type="helix" evidence="6">
    <location>
        <begin position="281"/>
        <end position="283"/>
    </location>
</feature>
<feature type="strand" evidence="6">
    <location>
        <begin position="286"/>
        <end position="289"/>
    </location>
</feature>
<feature type="helix" evidence="6">
    <location>
        <begin position="293"/>
        <end position="308"/>
    </location>
</feature>
<feature type="helix" evidence="6">
    <location>
        <begin position="313"/>
        <end position="317"/>
    </location>
</feature>
<feature type="strand" evidence="6">
    <location>
        <begin position="320"/>
        <end position="324"/>
    </location>
</feature>
<feature type="helix" evidence="6">
    <location>
        <begin position="340"/>
        <end position="343"/>
    </location>
</feature>
<feature type="helix" evidence="6">
    <location>
        <begin position="353"/>
        <end position="360"/>
    </location>
</feature>
<feature type="strand" evidence="6">
    <location>
        <begin position="363"/>
        <end position="367"/>
    </location>
</feature>
<feature type="helix" evidence="6">
    <location>
        <begin position="377"/>
        <end position="386"/>
    </location>
</feature>
<feature type="strand" evidence="6">
    <location>
        <begin position="391"/>
        <end position="394"/>
    </location>
</feature>
<feature type="helix" evidence="6">
    <location>
        <begin position="399"/>
        <end position="401"/>
    </location>
</feature>
<feature type="helix" evidence="6">
    <location>
        <begin position="406"/>
        <end position="412"/>
    </location>
</feature>
<feature type="turn" evidence="6">
    <location>
        <begin position="413"/>
        <end position="415"/>
    </location>
</feature>
<feature type="strand" evidence="6">
    <location>
        <begin position="418"/>
        <end position="423"/>
    </location>
</feature>
<feature type="helix" evidence="6">
    <location>
        <begin position="443"/>
        <end position="445"/>
    </location>
</feature>
<feature type="helix" evidence="6">
    <location>
        <begin position="447"/>
        <end position="457"/>
    </location>
</feature>
<feature type="helix" evidence="6">
    <location>
        <begin position="464"/>
        <end position="476"/>
    </location>
</feature>
<feature type="helix" evidence="6">
    <location>
        <begin position="480"/>
        <end position="484"/>
    </location>
</feature>
<feature type="helix" evidence="6">
    <location>
        <begin position="492"/>
        <end position="494"/>
    </location>
</feature>
<feature type="helix" evidence="6">
    <location>
        <begin position="495"/>
        <end position="512"/>
    </location>
</feature>
<feature type="helix" evidence="6">
    <location>
        <begin position="525"/>
        <end position="530"/>
    </location>
</feature>
<feature type="strand" evidence="6">
    <location>
        <begin position="550"/>
        <end position="553"/>
    </location>
</feature>
<comment type="catalytic activity">
    <reaction>
        <text>(S)-malate + NADP(+) = pyruvate + CO2 + NADPH</text>
        <dbReference type="Rhea" id="RHEA:18253"/>
        <dbReference type="ChEBI" id="CHEBI:15361"/>
        <dbReference type="ChEBI" id="CHEBI:15589"/>
        <dbReference type="ChEBI" id="CHEBI:16526"/>
        <dbReference type="ChEBI" id="CHEBI:57783"/>
        <dbReference type="ChEBI" id="CHEBI:58349"/>
        <dbReference type="EC" id="1.1.1.40"/>
    </reaction>
</comment>
<comment type="catalytic activity">
    <reaction>
        <text>oxaloacetate + H(+) = pyruvate + CO2</text>
        <dbReference type="Rhea" id="RHEA:15641"/>
        <dbReference type="ChEBI" id="CHEBI:15361"/>
        <dbReference type="ChEBI" id="CHEBI:15378"/>
        <dbReference type="ChEBI" id="CHEBI:16452"/>
        <dbReference type="ChEBI" id="CHEBI:16526"/>
        <dbReference type="EC" id="1.1.1.40"/>
    </reaction>
</comment>
<comment type="cofactor">
    <cofactor>
        <name>Mg(2+)</name>
        <dbReference type="ChEBI" id="CHEBI:18420"/>
    </cofactor>
    <cofactor>
        <name>Mn(2+)</name>
        <dbReference type="ChEBI" id="CHEBI:29035"/>
    </cofactor>
    <text>Divalent metal cations. Prefers magnesium or manganese.</text>
</comment>
<comment type="subunit">
    <text evidence="3">Homotetramer.</text>
</comment>
<comment type="subcellular location">
    <subcellularLocation>
        <location>Cytoplasm</location>
    </subcellularLocation>
</comment>
<comment type="PTM">
    <text>The N-terminus is blocked.</text>
</comment>
<comment type="similarity">
    <text evidence="4">Belongs to the malic enzymes family.</text>
</comment>
<name>MAOX_COLLI</name>
<protein>
    <recommendedName>
        <fullName>NADP-dependent malic enzyme</fullName>
        <shortName>NADP-ME</shortName>
        <ecNumber>1.1.1.40</ecNumber>
    </recommendedName>
</protein>
<proteinExistence type="evidence at protein level"/>
<gene>
    <name type="primary">ME1</name>
</gene>
<dbReference type="EC" id="1.1.1.40"/>
<dbReference type="EMBL" id="L09233">
    <property type="protein sequence ID" value="AAA49450.1"/>
    <property type="molecule type" value="mRNA"/>
</dbReference>
<dbReference type="PIR" id="S43231">
    <property type="entry name" value="S43231"/>
</dbReference>
<dbReference type="RefSeq" id="NP_001269745.1">
    <property type="nucleotide sequence ID" value="NM_001282816.1"/>
</dbReference>
<dbReference type="PDB" id="1GQ2">
    <property type="method" value="X-ray"/>
    <property type="resolution" value="2.50 A"/>
    <property type="chains" value="A/B/C/D/E/F/G/H/I/J/K/L/M/N/O/P=2-556"/>
</dbReference>
<dbReference type="PDBsum" id="1GQ2"/>
<dbReference type="SMR" id="P40927"/>
<dbReference type="GeneID" id="102096434"/>
<dbReference type="KEGG" id="clv:102096434"/>
<dbReference type="CTD" id="4199"/>
<dbReference type="eggNOG" id="KOG1257">
    <property type="taxonomic scope" value="Eukaryota"/>
</dbReference>
<dbReference type="OrthoDB" id="194319at8782"/>
<dbReference type="SABIO-RK" id="P40927"/>
<dbReference type="EvolutionaryTrace" id="P40927"/>
<dbReference type="GO" id="GO:0005739">
    <property type="term" value="C:mitochondrion"/>
    <property type="evidence" value="ECO:0007669"/>
    <property type="project" value="TreeGrafter"/>
</dbReference>
<dbReference type="GO" id="GO:0004473">
    <property type="term" value="F:malate dehydrogenase (decarboxylating) (NADP+) activity"/>
    <property type="evidence" value="ECO:0007669"/>
    <property type="project" value="UniProtKB-EC"/>
</dbReference>
<dbReference type="GO" id="GO:0046872">
    <property type="term" value="F:metal ion binding"/>
    <property type="evidence" value="ECO:0007669"/>
    <property type="project" value="UniProtKB-KW"/>
</dbReference>
<dbReference type="GO" id="GO:0051287">
    <property type="term" value="F:NAD binding"/>
    <property type="evidence" value="ECO:0007669"/>
    <property type="project" value="InterPro"/>
</dbReference>
<dbReference type="GO" id="GO:0008948">
    <property type="term" value="F:oxaloacetate decarboxylase activity"/>
    <property type="evidence" value="ECO:0007669"/>
    <property type="project" value="RHEA"/>
</dbReference>
<dbReference type="GO" id="GO:0006108">
    <property type="term" value="P:malate metabolic process"/>
    <property type="evidence" value="ECO:0007669"/>
    <property type="project" value="TreeGrafter"/>
</dbReference>
<dbReference type="CDD" id="cd05312">
    <property type="entry name" value="NAD_bind_1_malic_enz"/>
    <property type="match status" value="1"/>
</dbReference>
<dbReference type="FunFam" id="3.40.50.10380:FF:000004">
    <property type="entry name" value="Malic enzyme"/>
    <property type="match status" value="1"/>
</dbReference>
<dbReference type="FunFam" id="3.40.50.720:FF:000060">
    <property type="entry name" value="Malic enzyme"/>
    <property type="match status" value="1"/>
</dbReference>
<dbReference type="Gene3D" id="3.40.50.10380">
    <property type="entry name" value="Malic enzyme, N-terminal domain"/>
    <property type="match status" value="1"/>
</dbReference>
<dbReference type="Gene3D" id="3.40.50.720">
    <property type="entry name" value="NAD(P)-binding Rossmann-like Domain"/>
    <property type="match status" value="1"/>
</dbReference>
<dbReference type="InterPro" id="IPR046346">
    <property type="entry name" value="Aminoacid_DH-like_N_sf"/>
</dbReference>
<dbReference type="InterPro" id="IPR015884">
    <property type="entry name" value="Malic_enzyme_CS"/>
</dbReference>
<dbReference type="InterPro" id="IPR012301">
    <property type="entry name" value="Malic_N_dom"/>
</dbReference>
<dbReference type="InterPro" id="IPR037062">
    <property type="entry name" value="Malic_N_dom_sf"/>
</dbReference>
<dbReference type="InterPro" id="IPR012302">
    <property type="entry name" value="Malic_NAD-bd"/>
</dbReference>
<dbReference type="InterPro" id="IPR001891">
    <property type="entry name" value="Malic_OxRdtase"/>
</dbReference>
<dbReference type="InterPro" id="IPR036291">
    <property type="entry name" value="NAD(P)-bd_dom_sf"/>
</dbReference>
<dbReference type="NCBIfam" id="NF010052">
    <property type="entry name" value="PRK13529.1"/>
    <property type="match status" value="1"/>
</dbReference>
<dbReference type="PANTHER" id="PTHR23406">
    <property type="entry name" value="MALIC ENZYME-RELATED"/>
    <property type="match status" value="1"/>
</dbReference>
<dbReference type="PANTHER" id="PTHR23406:SF17">
    <property type="entry name" value="NADP-DEPENDENT MALIC ENZYME"/>
    <property type="match status" value="1"/>
</dbReference>
<dbReference type="Pfam" id="PF00390">
    <property type="entry name" value="malic"/>
    <property type="match status" value="1"/>
</dbReference>
<dbReference type="Pfam" id="PF03949">
    <property type="entry name" value="Malic_M"/>
    <property type="match status" value="1"/>
</dbReference>
<dbReference type="PIRSF" id="PIRSF000106">
    <property type="entry name" value="ME"/>
    <property type="match status" value="1"/>
</dbReference>
<dbReference type="PRINTS" id="PR00072">
    <property type="entry name" value="MALOXRDTASE"/>
</dbReference>
<dbReference type="SMART" id="SM01274">
    <property type="entry name" value="malic"/>
    <property type="match status" value="1"/>
</dbReference>
<dbReference type="SMART" id="SM00919">
    <property type="entry name" value="Malic_M"/>
    <property type="match status" value="1"/>
</dbReference>
<dbReference type="SUPFAM" id="SSF53223">
    <property type="entry name" value="Aminoacid dehydrogenase-like, N-terminal domain"/>
    <property type="match status" value="1"/>
</dbReference>
<dbReference type="SUPFAM" id="SSF51735">
    <property type="entry name" value="NAD(P)-binding Rossmann-fold domains"/>
    <property type="match status" value="1"/>
</dbReference>
<dbReference type="PROSITE" id="PS00331">
    <property type="entry name" value="MALIC_ENZYMES"/>
    <property type="match status" value="1"/>
</dbReference>
<evidence type="ECO:0000269" key="1">
    <source>
    </source>
</evidence>
<evidence type="ECO:0000269" key="2">
    <source>
    </source>
</evidence>
<evidence type="ECO:0000269" key="3">
    <source>
    </source>
</evidence>
<evidence type="ECO:0000305" key="4"/>
<evidence type="ECO:0000305" key="5">
    <source>
    </source>
</evidence>
<evidence type="ECO:0007829" key="6">
    <source>
        <dbReference type="PDB" id="1GQ2"/>
    </source>
</evidence>